<keyword id="KW-0413">Isomerase</keyword>
<keyword id="KW-0423">Lactose metabolism</keyword>
<organism>
    <name type="scientific">Streptococcus pyogenes serotype M6 (strain ATCC BAA-946 / MGAS10394)</name>
    <dbReference type="NCBI Taxonomy" id="286636"/>
    <lineage>
        <taxon>Bacteria</taxon>
        <taxon>Bacillati</taxon>
        <taxon>Bacillota</taxon>
        <taxon>Bacilli</taxon>
        <taxon>Lactobacillales</taxon>
        <taxon>Streptococcaceae</taxon>
        <taxon>Streptococcus</taxon>
    </lineage>
</organism>
<accession>Q5X9Y1</accession>
<comment type="catalytic activity">
    <reaction evidence="1">
        <text>aldehydo-D-galactose 6-phosphate = keto-D-tagatose 6-phosphate</text>
        <dbReference type="Rhea" id="RHEA:13033"/>
        <dbReference type="ChEBI" id="CHEBI:58255"/>
        <dbReference type="ChEBI" id="CHEBI:134283"/>
        <dbReference type="EC" id="5.3.1.26"/>
    </reaction>
</comment>
<comment type="pathway">
    <text evidence="1">Carbohydrate metabolism; D-galactose 6-phosphate degradation; D-tagatose 6-phosphate from D-galactose 6-phosphate: step 1/1.</text>
</comment>
<comment type="subunit">
    <text evidence="1">Heteromultimeric protein consisting of LacA and LacB.</text>
</comment>
<comment type="similarity">
    <text evidence="1">Belongs to the LacAB/RpiB family.</text>
</comment>
<protein>
    <recommendedName>
        <fullName evidence="1">Galactose-6-phosphate isomerase subunit LacA 2</fullName>
        <ecNumber evidence="1">5.3.1.26</ecNumber>
    </recommendedName>
</protein>
<evidence type="ECO:0000255" key="1">
    <source>
        <dbReference type="HAMAP-Rule" id="MF_01555"/>
    </source>
</evidence>
<reference key="1">
    <citation type="journal article" date="2004" name="J. Infect. Dis.">
        <title>Progress toward characterization of the group A Streptococcus metagenome: complete genome sequence of a macrolide-resistant serotype M6 strain.</title>
        <authorList>
            <person name="Banks D.J."/>
            <person name="Porcella S.F."/>
            <person name="Barbian K.D."/>
            <person name="Beres S.B."/>
            <person name="Philips L.E."/>
            <person name="Voyich J.M."/>
            <person name="DeLeo F.R."/>
            <person name="Martin J.M."/>
            <person name="Somerville G.A."/>
            <person name="Musser J.M."/>
        </authorList>
    </citation>
    <scope>NUCLEOTIDE SEQUENCE [LARGE SCALE GENOMIC DNA]</scope>
    <source>
        <strain>ATCC BAA-946 / MGAS10394</strain>
    </source>
</reference>
<proteinExistence type="inferred from homology"/>
<dbReference type="EC" id="5.3.1.26" evidence="1"/>
<dbReference type="EMBL" id="CP000003">
    <property type="protein sequence ID" value="AAT87782.1"/>
    <property type="molecule type" value="Genomic_DNA"/>
</dbReference>
<dbReference type="SMR" id="Q5X9Y1"/>
<dbReference type="KEGG" id="spa:M6_Spy1647"/>
<dbReference type="HOGENOM" id="CLU_091396_4_2_9"/>
<dbReference type="UniPathway" id="UPA00702">
    <property type="reaction ID" value="UER00714"/>
</dbReference>
<dbReference type="Proteomes" id="UP000001167">
    <property type="component" value="Chromosome"/>
</dbReference>
<dbReference type="GO" id="GO:0050044">
    <property type="term" value="F:galactose-6-phosphate isomerase activity"/>
    <property type="evidence" value="ECO:0007669"/>
    <property type="project" value="UniProtKB-UniRule"/>
</dbReference>
<dbReference type="GO" id="GO:0004751">
    <property type="term" value="F:ribose-5-phosphate isomerase activity"/>
    <property type="evidence" value="ECO:0007669"/>
    <property type="project" value="TreeGrafter"/>
</dbReference>
<dbReference type="GO" id="GO:0019316">
    <property type="term" value="P:D-allose catabolic process"/>
    <property type="evidence" value="ECO:0007669"/>
    <property type="project" value="TreeGrafter"/>
</dbReference>
<dbReference type="GO" id="GO:0019388">
    <property type="term" value="P:galactose catabolic process"/>
    <property type="evidence" value="ECO:0007669"/>
    <property type="project" value="UniProtKB-UniPathway"/>
</dbReference>
<dbReference type="GO" id="GO:0019512">
    <property type="term" value="P:lactose catabolic process via tagatose-6-phosphate"/>
    <property type="evidence" value="ECO:0007669"/>
    <property type="project" value="UniProtKB-UniRule"/>
</dbReference>
<dbReference type="GO" id="GO:0009052">
    <property type="term" value="P:pentose-phosphate shunt, non-oxidative branch"/>
    <property type="evidence" value="ECO:0007669"/>
    <property type="project" value="TreeGrafter"/>
</dbReference>
<dbReference type="Gene3D" id="3.40.1400.10">
    <property type="entry name" value="Sugar-phosphate isomerase, RpiB/LacA/LacB"/>
    <property type="match status" value="1"/>
</dbReference>
<dbReference type="HAMAP" id="MF_01555">
    <property type="entry name" value="LacA"/>
    <property type="match status" value="1"/>
</dbReference>
<dbReference type="InterPro" id="IPR004783">
    <property type="entry name" value="LacA"/>
</dbReference>
<dbReference type="InterPro" id="IPR003500">
    <property type="entry name" value="RpiB_LacA_LacB"/>
</dbReference>
<dbReference type="InterPro" id="IPR036569">
    <property type="entry name" value="RpiB_LacA_LacB_sf"/>
</dbReference>
<dbReference type="NCBIfam" id="TIGR01118">
    <property type="entry name" value="lacA"/>
    <property type="match status" value="1"/>
</dbReference>
<dbReference type="NCBIfam" id="NF006380">
    <property type="entry name" value="PRK08621.1"/>
    <property type="match status" value="1"/>
</dbReference>
<dbReference type="NCBIfam" id="TIGR00689">
    <property type="entry name" value="rpiB_lacA_lacB"/>
    <property type="match status" value="1"/>
</dbReference>
<dbReference type="PANTHER" id="PTHR30345:SF5">
    <property type="entry name" value="GALACTOSE-6-PHOSPHATE ISOMERASE SUBUNIT LACA"/>
    <property type="match status" value="1"/>
</dbReference>
<dbReference type="PANTHER" id="PTHR30345">
    <property type="entry name" value="RIBOSE-5-PHOSPHATE ISOMERASE B"/>
    <property type="match status" value="1"/>
</dbReference>
<dbReference type="Pfam" id="PF02502">
    <property type="entry name" value="LacAB_rpiB"/>
    <property type="match status" value="1"/>
</dbReference>
<dbReference type="PIRSF" id="PIRSF005384">
    <property type="entry name" value="RpiB_LacA_B"/>
    <property type="match status" value="1"/>
</dbReference>
<dbReference type="SUPFAM" id="SSF89623">
    <property type="entry name" value="Ribose/Galactose isomerase RpiB/AlsB"/>
    <property type="match status" value="1"/>
</dbReference>
<gene>
    <name evidence="1" type="primary">lacA2</name>
    <name type="ordered locus">M6_Spy1647</name>
</gene>
<feature type="chain" id="PRO_0000208131" description="Galactose-6-phosphate isomerase subunit LacA 2">
    <location>
        <begin position="1"/>
        <end position="142"/>
    </location>
</feature>
<sequence>MAIIIGADKAGQELKEVIKDYLKEGKYEVVDVSENEVRDFVDTTLAVAKEVNASEDNLGIVIDAYGVGSFMVATKIKGMVAAEVSDERSAYMTRGHNNARIITLGSEISAPGIAKNIIKGFVEGKYDGGRHQVRVDMLNKMC</sequence>
<name>LACA2_STRP6</name>